<comment type="subunit">
    <text evidence="1">Monomer. Interacts with AZGP1 (By similarity).</text>
</comment>
<comment type="subcellular location">
    <subcellularLocation>
        <location evidence="1">Secreted</location>
    </subcellularLocation>
</comment>
<comment type="similarity">
    <text evidence="4">Belongs to the PIP family.</text>
</comment>
<reference key="1">
    <citation type="journal article" date="2004" name="Gene">
        <title>Divergent evolution of the prolactin-inducible protein gene and related genes in the mouse genome.</title>
        <authorList>
            <person name="Osawa M."/>
            <person name="Horiuchi H."/>
            <person name="Tian W."/>
            <person name="Kaneko M."/>
        </authorList>
    </citation>
    <scope>NUCLEOTIDE SEQUENCE [GENOMIC DNA]</scope>
</reference>
<reference key="2">
    <citation type="journal article" date="2006" name="Gene">
        <title>Origin and evolution of gene for prolactin-induced protein.</title>
        <authorList>
            <person name="Kitano T."/>
            <person name="Tian W."/>
            <person name="Umetsu K."/>
            <person name="Yuasa I."/>
            <person name="Yamazaki K."/>
            <person name="Saitou N."/>
            <person name="Osawa M."/>
        </authorList>
    </citation>
    <scope>NUCLEOTIDE SEQUENCE [GENOMIC DNA]</scope>
    <source>
        <strain>Isolate T028</strain>
        <strain>Isolate T030</strain>
    </source>
</reference>
<organism>
    <name type="scientific">Pan troglodytes</name>
    <name type="common">Chimpanzee</name>
    <dbReference type="NCBI Taxonomy" id="9598"/>
    <lineage>
        <taxon>Eukaryota</taxon>
        <taxon>Metazoa</taxon>
        <taxon>Chordata</taxon>
        <taxon>Craniata</taxon>
        <taxon>Vertebrata</taxon>
        <taxon>Euteleostomi</taxon>
        <taxon>Mammalia</taxon>
        <taxon>Eutheria</taxon>
        <taxon>Euarchontoglires</taxon>
        <taxon>Primates</taxon>
        <taxon>Haplorrhini</taxon>
        <taxon>Catarrhini</taxon>
        <taxon>Hominidae</taxon>
        <taxon>Pan</taxon>
    </lineage>
</organism>
<dbReference type="EMBL" id="AB098482">
    <property type="protein sequence ID" value="BAD04930.1"/>
    <property type="molecule type" value="Genomic_DNA"/>
</dbReference>
<dbReference type="EMBL" id="AB251899">
    <property type="protein sequence ID" value="BAF35619.1"/>
    <property type="molecule type" value="Genomic_DNA"/>
</dbReference>
<dbReference type="EMBL" id="AB251900">
    <property type="protein sequence ID" value="BAF35620.1"/>
    <property type="molecule type" value="Genomic_DNA"/>
</dbReference>
<dbReference type="RefSeq" id="NP_001009170.1">
    <property type="nucleotide sequence ID" value="NM_001009170.1"/>
</dbReference>
<dbReference type="SMR" id="P60989"/>
<dbReference type="FunCoup" id="P60989">
    <property type="interactions" value="349"/>
</dbReference>
<dbReference type="STRING" id="9598.ENSPTRP00000033915"/>
<dbReference type="GlyCosmos" id="P60989">
    <property type="glycosylation" value="1 site, No reported glycans"/>
</dbReference>
<dbReference type="PaxDb" id="9598-ENSPTRP00000033915"/>
<dbReference type="Ensembl" id="ENSPTRT00000036677.3">
    <property type="protein sequence ID" value="ENSPTRP00000033915.2"/>
    <property type="gene ID" value="ENSPTRG00000019801.5"/>
</dbReference>
<dbReference type="GeneID" id="494144"/>
<dbReference type="KEGG" id="ptr:494144"/>
<dbReference type="CTD" id="5304"/>
<dbReference type="VGNC" id="VGNC:8733">
    <property type="gene designation" value="PIP"/>
</dbReference>
<dbReference type="eggNOG" id="ENOG502T2PG">
    <property type="taxonomic scope" value="Eukaryota"/>
</dbReference>
<dbReference type="GeneTree" id="ENSGT00390000002099"/>
<dbReference type="HOGENOM" id="CLU_148761_0_0_1"/>
<dbReference type="InParanoid" id="P60989"/>
<dbReference type="OMA" id="ECMVIKT"/>
<dbReference type="OrthoDB" id="4328at9604"/>
<dbReference type="TreeFam" id="TF336919"/>
<dbReference type="Proteomes" id="UP000002277">
    <property type="component" value="Chromosome 7"/>
</dbReference>
<dbReference type="GO" id="GO:0005615">
    <property type="term" value="C:extracellular space"/>
    <property type="evidence" value="ECO:0000318"/>
    <property type="project" value="GO_Central"/>
</dbReference>
<dbReference type="GO" id="GO:0005634">
    <property type="term" value="C:nucleus"/>
    <property type="evidence" value="ECO:0007669"/>
    <property type="project" value="Ensembl"/>
</dbReference>
<dbReference type="GO" id="GO:0004190">
    <property type="term" value="F:aspartic-type endopeptidase activity"/>
    <property type="evidence" value="ECO:0000318"/>
    <property type="project" value="GO_Central"/>
</dbReference>
<dbReference type="GO" id="GO:0042802">
    <property type="term" value="F:identical protein binding"/>
    <property type="evidence" value="ECO:0007669"/>
    <property type="project" value="Ensembl"/>
</dbReference>
<dbReference type="GO" id="GO:0019864">
    <property type="term" value="F:IgG binding"/>
    <property type="evidence" value="ECO:0007669"/>
    <property type="project" value="Ensembl"/>
</dbReference>
<dbReference type="GO" id="GO:0001580">
    <property type="term" value="P:detection of chemical stimulus involved in sensory perception of bitter taste"/>
    <property type="evidence" value="ECO:0007669"/>
    <property type="project" value="Ensembl"/>
</dbReference>
<dbReference type="GO" id="GO:0070233">
    <property type="term" value="P:negative regulation of T cell apoptotic process"/>
    <property type="evidence" value="ECO:0007669"/>
    <property type="project" value="Ensembl"/>
</dbReference>
<dbReference type="GO" id="GO:0010628">
    <property type="term" value="P:positive regulation of gene expression"/>
    <property type="evidence" value="ECO:0007669"/>
    <property type="project" value="Ensembl"/>
</dbReference>
<dbReference type="GO" id="GO:0006508">
    <property type="term" value="P:proteolysis"/>
    <property type="evidence" value="ECO:0000318"/>
    <property type="project" value="GO_Central"/>
</dbReference>
<dbReference type="GO" id="GO:0002682">
    <property type="term" value="P:regulation of immune system process"/>
    <property type="evidence" value="ECO:0000318"/>
    <property type="project" value="GO_Central"/>
</dbReference>
<dbReference type="FunFam" id="2.60.40.10:FF:001572">
    <property type="entry name" value="Prolactin-inducible protein homolog"/>
    <property type="match status" value="1"/>
</dbReference>
<dbReference type="Gene3D" id="2.60.40.10">
    <property type="entry name" value="Immunoglobulins"/>
    <property type="match status" value="1"/>
</dbReference>
<dbReference type="InterPro" id="IPR013783">
    <property type="entry name" value="Ig-like_fold"/>
</dbReference>
<dbReference type="InterPro" id="IPR014756">
    <property type="entry name" value="Ig_E-set"/>
</dbReference>
<dbReference type="InterPro" id="IPR007990">
    <property type="entry name" value="PIP"/>
</dbReference>
<dbReference type="PANTHER" id="PTHR15096:SF5">
    <property type="entry name" value="PROLACTIN-INDUCIBLE PROTEIN"/>
    <property type="match status" value="1"/>
</dbReference>
<dbReference type="PANTHER" id="PTHR15096">
    <property type="entry name" value="PROLACTIN-INDUCIBLE PROTEIN/SEMINAL VESICLE ANTIGEN"/>
    <property type="match status" value="1"/>
</dbReference>
<dbReference type="Pfam" id="PF05326">
    <property type="entry name" value="SVA"/>
    <property type="match status" value="1"/>
</dbReference>
<dbReference type="PIRSF" id="PIRSF002572">
    <property type="entry name" value="PIP-GCDFP-15"/>
    <property type="match status" value="1"/>
</dbReference>
<dbReference type="SUPFAM" id="SSF81296">
    <property type="entry name" value="E set domains"/>
    <property type="match status" value="1"/>
</dbReference>
<feature type="signal peptide" evidence="1">
    <location>
        <begin position="1"/>
        <end position="28"/>
    </location>
</feature>
<feature type="chain" id="PRO_0000024291" description="Prolactin-inducible protein homolog">
    <location>
        <begin position="29"/>
        <end position="146"/>
    </location>
</feature>
<feature type="modified residue" description="Pyrrolidone carboxylic acid" evidence="2">
    <location>
        <position position="29"/>
    </location>
</feature>
<feature type="glycosylation site" description="N-linked (GlcNAc...) asparagine" evidence="3">
    <location>
        <position position="105"/>
    </location>
</feature>
<feature type="disulfide bond" evidence="1">
    <location>
        <begin position="65"/>
        <end position="91"/>
    </location>
</feature>
<feature type="disulfide bond" evidence="1">
    <location>
        <begin position="89"/>
        <end position="123"/>
    </location>
</feature>
<sequence length="146" mass="16575">MRLFQLLFRASPATLLLVLCLQLGANKAQDNTRKIIIHNFDIPKSVRPNDEVTAVLAVQTELKECMVVKTYLISSIPLQGAFNYKYTACLCDDNPKTFYWDFYTNRTVQIAAVVDVIQELGICPDDAAVIPIKNNRFYTTEILKVE</sequence>
<accession>P60989</accession>
<accession>A0A883</accession>
<gene>
    <name type="primary">PIP</name>
</gene>
<protein>
    <recommendedName>
        <fullName>Prolactin-inducible protein homolog</fullName>
    </recommendedName>
    <alternativeName>
        <fullName>Prolactin-induced protein</fullName>
    </alternativeName>
</protein>
<proteinExistence type="inferred from homology"/>
<evidence type="ECO:0000250" key="1"/>
<evidence type="ECO:0000250" key="2">
    <source>
        <dbReference type="UniProtKB" id="P12273"/>
    </source>
</evidence>
<evidence type="ECO:0000255" key="3"/>
<evidence type="ECO:0000305" key="4"/>
<keyword id="KW-1015">Disulfide bond</keyword>
<keyword id="KW-0325">Glycoprotein</keyword>
<keyword id="KW-0873">Pyrrolidone carboxylic acid</keyword>
<keyword id="KW-1185">Reference proteome</keyword>
<keyword id="KW-0964">Secreted</keyword>
<keyword id="KW-0732">Signal</keyword>
<name>PIP_PANTR</name>